<keyword id="KW-1185">Reference proteome</keyword>
<keyword id="KW-0687">Ribonucleoprotein</keyword>
<keyword id="KW-0689">Ribosomal protein</keyword>
<evidence type="ECO:0000255" key="1">
    <source>
        <dbReference type="HAMAP-Rule" id="MF_00532"/>
    </source>
</evidence>
<evidence type="ECO:0000305" key="2"/>
<organism>
    <name type="scientific">Pelodictyon phaeoclathratiforme (strain DSM 5477 / BU-1)</name>
    <dbReference type="NCBI Taxonomy" id="324925"/>
    <lineage>
        <taxon>Bacteria</taxon>
        <taxon>Pseudomonadati</taxon>
        <taxon>Chlorobiota</taxon>
        <taxon>Chlorobiia</taxon>
        <taxon>Chlorobiales</taxon>
        <taxon>Chlorobiaceae</taxon>
        <taxon>Chlorobium/Pelodictyon group</taxon>
        <taxon>Pelodictyon</taxon>
    </lineage>
</organism>
<dbReference type="EMBL" id="CP001110">
    <property type="protein sequence ID" value="ACF44547.1"/>
    <property type="molecule type" value="Genomic_DNA"/>
</dbReference>
<dbReference type="RefSeq" id="WP_012509021.1">
    <property type="nucleotide sequence ID" value="NC_011060.1"/>
</dbReference>
<dbReference type="SMR" id="B4SEC8"/>
<dbReference type="STRING" id="324925.Ppha_2354"/>
<dbReference type="KEGG" id="pph:Ppha_2354"/>
<dbReference type="eggNOG" id="COG0103">
    <property type="taxonomic scope" value="Bacteria"/>
</dbReference>
<dbReference type="HOGENOM" id="CLU_046483_2_1_10"/>
<dbReference type="OrthoDB" id="9803965at2"/>
<dbReference type="Proteomes" id="UP000002724">
    <property type="component" value="Chromosome"/>
</dbReference>
<dbReference type="GO" id="GO:0005737">
    <property type="term" value="C:cytoplasm"/>
    <property type="evidence" value="ECO:0007669"/>
    <property type="project" value="UniProtKB-ARBA"/>
</dbReference>
<dbReference type="GO" id="GO:0015935">
    <property type="term" value="C:small ribosomal subunit"/>
    <property type="evidence" value="ECO:0007669"/>
    <property type="project" value="TreeGrafter"/>
</dbReference>
<dbReference type="GO" id="GO:0003723">
    <property type="term" value="F:RNA binding"/>
    <property type="evidence" value="ECO:0007669"/>
    <property type="project" value="TreeGrafter"/>
</dbReference>
<dbReference type="GO" id="GO:0003735">
    <property type="term" value="F:structural constituent of ribosome"/>
    <property type="evidence" value="ECO:0007669"/>
    <property type="project" value="InterPro"/>
</dbReference>
<dbReference type="GO" id="GO:0006412">
    <property type="term" value="P:translation"/>
    <property type="evidence" value="ECO:0007669"/>
    <property type="project" value="UniProtKB-UniRule"/>
</dbReference>
<dbReference type="FunFam" id="3.30.230.10:FF:000001">
    <property type="entry name" value="30S ribosomal protein S9"/>
    <property type="match status" value="1"/>
</dbReference>
<dbReference type="Gene3D" id="3.30.230.10">
    <property type="match status" value="1"/>
</dbReference>
<dbReference type="HAMAP" id="MF_00532_B">
    <property type="entry name" value="Ribosomal_uS9_B"/>
    <property type="match status" value="1"/>
</dbReference>
<dbReference type="InterPro" id="IPR020568">
    <property type="entry name" value="Ribosomal_Su5_D2-typ_SF"/>
</dbReference>
<dbReference type="InterPro" id="IPR000754">
    <property type="entry name" value="Ribosomal_uS9"/>
</dbReference>
<dbReference type="InterPro" id="IPR023035">
    <property type="entry name" value="Ribosomal_uS9_bac/plastid"/>
</dbReference>
<dbReference type="InterPro" id="IPR020574">
    <property type="entry name" value="Ribosomal_uS9_CS"/>
</dbReference>
<dbReference type="InterPro" id="IPR014721">
    <property type="entry name" value="Ribsml_uS5_D2-typ_fold_subgr"/>
</dbReference>
<dbReference type="NCBIfam" id="NF001099">
    <property type="entry name" value="PRK00132.1"/>
    <property type="match status" value="1"/>
</dbReference>
<dbReference type="PANTHER" id="PTHR21569">
    <property type="entry name" value="RIBOSOMAL PROTEIN S9"/>
    <property type="match status" value="1"/>
</dbReference>
<dbReference type="PANTHER" id="PTHR21569:SF1">
    <property type="entry name" value="SMALL RIBOSOMAL SUBUNIT PROTEIN US9M"/>
    <property type="match status" value="1"/>
</dbReference>
<dbReference type="Pfam" id="PF00380">
    <property type="entry name" value="Ribosomal_S9"/>
    <property type="match status" value="1"/>
</dbReference>
<dbReference type="SUPFAM" id="SSF54211">
    <property type="entry name" value="Ribosomal protein S5 domain 2-like"/>
    <property type="match status" value="1"/>
</dbReference>
<dbReference type="PROSITE" id="PS00360">
    <property type="entry name" value="RIBOSOMAL_S9"/>
    <property type="match status" value="1"/>
</dbReference>
<sequence>MKEVIDTVGRRKTSVARAFMIPGKGRVIVNKLPIEEYFKDEFKRQQALRPLVITERAEEFDIKINVQGGGVSGQSGAVSLAIARALTEFDETARVILKTEKLLTRDPRMVERKKFGRKKARKRFQFSKR</sequence>
<comment type="similarity">
    <text evidence="1">Belongs to the universal ribosomal protein uS9 family.</text>
</comment>
<name>RS9_PELPB</name>
<accession>B4SEC8</accession>
<reference key="1">
    <citation type="submission" date="2008-06" db="EMBL/GenBank/DDBJ databases">
        <title>Complete sequence of Pelodictyon phaeoclathratiforme BU-1.</title>
        <authorList>
            <consortium name="US DOE Joint Genome Institute"/>
            <person name="Lucas S."/>
            <person name="Copeland A."/>
            <person name="Lapidus A."/>
            <person name="Glavina del Rio T."/>
            <person name="Dalin E."/>
            <person name="Tice H."/>
            <person name="Bruce D."/>
            <person name="Goodwin L."/>
            <person name="Pitluck S."/>
            <person name="Schmutz J."/>
            <person name="Larimer F."/>
            <person name="Land M."/>
            <person name="Hauser L."/>
            <person name="Kyrpides N."/>
            <person name="Mikhailova N."/>
            <person name="Liu Z."/>
            <person name="Li T."/>
            <person name="Zhao F."/>
            <person name="Overmann J."/>
            <person name="Bryant D.A."/>
            <person name="Richardson P."/>
        </authorList>
    </citation>
    <scope>NUCLEOTIDE SEQUENCE [LARGE SCALE GENOMIC DNA]</scope>
    <source>
        <strain>DSM 5477 / BU-1</strain>
    </source>
</reference>
<gene>
    <name evidence="1" type="primary">rpsI</name>
    <name type="ordered locus">Ppha_2354</name>
</gene>
<proteinExistence type="inferred from homology"/>
<protein>
    <recommendedName>
        <fullName evidence="1">Small ribosomal subunit protein uS9</fullName>
    </recommendedName>
    <alternativeName>
        <fullName evidence="2">30S ribosomal protein S9</fullName>
    </alternativeName>
</protein>
<feature type="chain" id="PRO_1000128149" description="Small ribosomal subunit protein uS9">
    <location>
        <begin position="1"/>
        <end position="129"/>
    </location>
</feature>